<evidence type="ECO:0000250" key="1"/>
<evidence type="ECO:0000255" key="2">
    <source>
        <dbReference type="PROSITE-ProRule" id="PRU00257"/>
    </source>
</evidence>
<evidence type="ECO:0000256" key="3">
    <source>
        <dbReference type="SAM" id="MobiDB-lite"/>
    </source>
</evidence>
<evidence type="ECO:0000269" key="4">
    <source>
    </source>
</evidence>
<evidence type="ECO:0000269" key="5">
    <source>
    </source>
</evidence>
<evidence type="ECO:0000269" key="6">
    <source>
    </source>
</evidence>
<evidence type="ECO:0000269" key="7">
    <source>
    </source>
</evidence>
<evidence type="ECO:0000305" key="8"/>
<sequence length="142" mass="15582">MAGIGPITQDWEPVVIRKRAPNAAAKRDEKTVNAARRSGADIETVRKFNAGSNKAASSGTSLNTKKLDDDTENLSHDRVPTELKKAIMQARGEKKLTQSQLAHLINEKPQVIQEYESGKAIPNQQILSKLERALGAKLRGKK</sequence>
<keyword id="KW-0010">Activator</keyword>
<keyword id="KW-0238">DNA-binding</keyword>
<keyword id="KW-0539">Nucleus</keyword>
<keyword id="KW-1185">Reference proteome</keyword>
<keyword id="KW-0804">Transcription</keyword>
<keyword id="KW-0805">Transcription regulation</keyword>
<name>MBF1B_ARATH</name>
<organism>
    <name type="scientific">Arabidopsis thaliana</name>
    <name type="common">Mouse-ear cress</name>
    <dbReference type="NCBI Taxonomy" id="3702"/>
    <lineage>
        <taxon>Eukaryota</taxon>
        <taxon>Viridiplantae</taxon>
        <taxon>Streptophyta</taxon>
        <taxon>Embryophyta</taxon>
        <taxon>Tracheophyta</taxon>
        <taxon>Spermatophyta</taxon>
        <taxon>Magnoliopsida</taxon>
        <taxon>eudicotyledons</taxon>
        <taxon>Gunneridae</taxon>
        <taxon>Pentapetalae</taxon>
        <taxon>rosids</taxon>
        <taxon>malvids</taxon>
        <taxon>Brassicales</taxon>
        <taxon>Brassicaceae</taxon>
        <taxon>Camelineae</taxon>
        <taxon>Arabidopsis</taxon>
    </lineage>
</organism>
<accession>Q9LXT3</accession>
<proteinExistence type="evidence at protein level"/>
<comment type="function">
    <text evidence="1 4">Transcriptional coactivator that stimulates transcriptional activity by bridging regulatory proteins and TBP, thereby recruiting TBP to promoters occupied by DNA-binding regulators.</text>
</comment>
<comment type="interaction">
    <interactant intactId="EBI-15217346">
        <id>Q9LXT3</id>
    </interactant>
    <interactant intactId="EBI-604555">
        <id>Q84JU4</id>
        <label>IBR5</label>
    </interactant>
    <organismsDiffer>false</organismsDiffer>
    <experiments>3</experiments>
</comment>
<comment type="subcellular location">
    <subcellularLocation>
        <location evidence="7">Nucleus</location>
        <location evidence="7">Nucleolus</location>
    </subcellularLocation>
</comment>
<comment type="tissue specificity">
    <text evidence="4 5">Expressed in leaves, roots, stems, petioles and shoots. Higher expression in flowers and siliques. Detected in leaf veins through development.</text>
</comment>
<comment type="developmental stage">
    <text evidence="5">Detected only in seeds of 2-3 days after pollination (dap) siliques.</text>
</comment>
<comment type="induction">
    <text evidence="4 5 6">Not induced by heat or cold treatments, H(2)O(2), dehydration, high salt, abscisic acid, 2,4-D, ACC, methyl jasmonate or salicylic acid.</text>
</comment>
<comment type="similarity">
    <text evidence="8">Belongs to the MBF1 family.</text>
</comment>
<gene>
    <name type="primary">MBF1B</name>
    <name type="ordered locus">At3g58680</name>
    <name type="ORF">T20N10.30</name>
</gene>
<dbReference type="EMBL" id="AL353032">
    <property type="protein sequence ID" value="CAB88285.1"/>
    <property type="molecule type" value="Genomic_DNA"/>
</dbReference>
<dbReference type="EMBL" id="CP002686">
    <property type="protein sequence ID" value="AEE79817.1"/>
    <property type="molecule type" value="Genomic_DNA"/>
</dbReference>
<dbReference type="EMBL" id="AF324717">
    <property type="protein sequence ID" value="AAG40068.1"/>
    <property type="molecule type" value="mRNA"/>
</dbReference>
<dbReference type="EMBL" id="AF326909">
    <property type="protein sequence ID" value="AAG41491.1"/>
    <property type="molecule type" value="mRNA"/>
</dbReference>
<dbReference type="EMBL" id="AF339728">
    <property type="protein sequence ID" value="AAK00410.1"/>
    <property type="molecule type" value="mRNA"/>
</dbReference>
<dbReference type="EMBL" id="AY042850">
    <property type="protein sequence ID" value="AAK68790.1"/>
    <property type="molecule type" value="mRNA"/>
</dbReference>
<dbReference type="EMBL" id="AY081487">
    <property type="protein sequence ID" value="AAM10049.1"/>
    <property type="molecule type" value="mRNA"/>
</dbReference>
<dbReference type="EMBL" id="AY084597">
    <property type="protein sequence ID" value="AAM61162.1"/>
    <property type="molecule type" value="mRNA"/>
</dbReference>
<dbReference type="PIR" id="T49151">
    <property type="entry name" value="T49151"/>
</dbReference>
<dbReference type="RefSeq" id="NP_191427.1">
    <property type="nucleotide sequence ID" value="NM_115730.4"/>
</dbReference>
<dbReference type="SMR" id="Q9LXT3"/>
<dbReference type="BioGRID" id="10352">
    <property type="interactions" value="9"/>
</dbReference>
<dbReference type="FunCoup" id="Q9LXT3">
    <property type="interactions" value="3343"/>
</dbReference>
<dbReference type="IntAct" id="Q9LXT3">
    <property type="interactions" value="9"/>
</dbReference>
<dbReference type="STRING" id="3702.Q9LXT3"/>
<dbReference type="iPTMnet" id="Q9LXT3"/>
<dbReference type="MetOSite" id="Q9LXT3"/>
<dbReference type="PaxDb" id="3702-AT3G58680.1"/>
<dbReference type="ProteomicsDB" id="238374"/>
<dbReference type="EnsemblPlants" id="AT3G58680.1">
    <property type="protein sequence ID" value="AT3G58680.1"/>
    <property type="gene ID" value="AT3G58680"/>
</dbReference>
<dbReference type="GeneID" id="825037"/>
<dbReference type="Gramene" id="AT3G58680.1">
    <property type="protein sequence ID" value="AT3G58680.1"/>
    <property type="gene ID" value="AT3G58680"/>
</dbReference>
<dbReference type="KEGG" id="ath:AT3G58680"/>
<dbReference type="Araport" id="AT3G58680"/>
<dbReference type="TAIR" id="AT3G58680">
    <property type="gene designation" value="MBF1B"/>
</dbReference>
<dbReference type="eggNOG" id="KOG3398">
    <property type="taxonomic scope" value="Eukaryota"/>
</dbReference>
<dbReference type="HOGENOM" id="CLU_112609_1_0_1"/>
<dbReference type="InParanoid" id="Q9LXT3"/>
<dbReference type="OMA" id="IMHARTE"/>
<dbReference type="OrthoDB" id="10253401at2759"/>
<dbReference type="PhylomeDB" id="Q9LXT3"/>
<dbReference type="PRO" id="PR:Q9LXT3"/>
<dbReference type="Proteomes" id="UP000006548">
    <property type="component" value="Chromosome 3"/>
</dbReference>
<dbReference type="ExpressionAtlas" id="Q9LXT3">
    <property type="expression patterns" value="baseline and differential"/>
</dbReference>
<dbReference type="GO" id="GO:0005737">
    <property type="term" value="C:cytoplasm"/>
    <property type="evidence" value="ECO:0007005"/>
    <property type="project" value="TAIR"/>
</dbReference>
<dbReference type="GO" id="GO:0005829">
    <property type="term" value="C:cytosol"/>
    <property type="evidence" value="ECO:0007005"/>
    <property type="project" value="TAIR"/>
</dbReference>
<dbReference type="GO" id="GO:0005730">
    <property type="term" value="C:nucleolus"/>
    <property type="evidence" value="ECO:0000314"/>
    <property type="project" value="TAIR"/>
</dbReference>
<dbReference type="GO" id="GO:0005634">
    <property type="term" value="C:nucleus"/>
    <property type="evidence" value="ECO:0007005"/>
    <property type="project" value="TAIR"/>
</dbReference>
<dbReference type="GO" id="GO:0003677">
    <property type="term" value="F:DNA binding"/>
    <property type="evidence" value="ECO:0007669"/>
    <property type="project" value="UniProtKB-KW"/>
</dbReference>
<dbReference type="GO" id="GO:0003729">
    <property type="term" value="F:mRNA binding"/>
    <property type="evidence" value="ECO:0000314"/>
    <property type="project" value="TAIR"/>
</dbReference>
<dbReference type="GO" id="GO:0003713">
    <property type="term" value="F:transcription coactivator activity"/>
    <property type="evidence" value="ECO:0000316"/>
    <property type="project" value="TAIR"/>
</dbReference>
<dbReference type="GO" id="GO:0045893">
    <property type="term" value="P:positive regulation of DNA-templated transcription"/>
    <property type="evidence" value="ECO:0000304"/>
    <property type="project" value="TAIR"/>
</dbReference>
<dbReference type="CDD" id="cd00093">
    <property type="entry name" value="HTH_XRE"/>
    <property type="match status" value="1"/>
</dbReference>
<dbReference type="FunFam" id="1.10.260.40:FF:000018">
    <property type="entry name" value="Multiprotein bridging factor 1"/>
    <property type="match status" value="1"/>
</dbReference>
<dbReference type="Gene3D" id="1.10.260.40">
    <property type="entry name" value="lambda repressor-like DNA-binding domains"/>
    <property type="match status" value="1"/>
</dbReference>
<dbReference type="InterPro" id="IPR001387">
    <property type="entry name" value="Cro/C1-type_HTH"/>
</dbReference>
<dbReference type="InterPro" id="IPR010982">
    <property type="entry name" value="Lambda_DNA-bd_dom_sf"/>
</dbReference>
<dbReference type="InterPro" id="IPR013729">
    <property type="entry name" value="MBF1_N"/>
</dbReference>
<dbReference type="PANTHER" id="PTHR10245">
    <property type="entry name" value="ENDOTHELIAL DIFFERENTIATION-RELATED FACTOR 1 MULTIPROTEIN BRIDGING FACTOR 1"/>
    <property type="match status" value="1"/>
</dbReference>
<dbReference type="PANTHER" id="PTHR10245:SF117">
    <property type="entry name" value="MULTIPROTEIN-BRIDGING FACTOR 1B"/>
    <property type="match status" value="1"/>
</dbReference>
<dbReference type="Pfam" id="PF01381">
    <property type="entry name" value="HTH_3"/>
    <property type="match status" value="1"/>
</dbReference>
<dbReference type="Pfam" id="PF08523">
    <property type="entry name" value="MBF1"/>
    <property type="match status" value="1"/>
</dbReference>
<dbReference type="SMART" id="SM00530">
    <property type="entry name" value="HTH_XRE"/>
    <property type="match status" value="1"/>
</dbReference>
<dbReference type="SUPFAM" id="SSF47413">
    <property type="entry name" value="lambda repressor-like DNA-binding domains"/>
    <property type="match status" value="1"/>
</dbReference>
<dbReference type="PROSITE" id="PS50943">
    <property type="entry name" value="HTH_CROC1"/>
    <property type="match status" value="1"/>
</dbReference>
<protein>
    <recommendedName>
        <fullName>Multiprotein-bridging factor 1b</fullName>
    </recommendedName>
</protein>
<reference key="1">
    <citation type="journal article" date="2000" name="Nature">
        <title>Sequence and analysis of chromosome 3 of the plant Arabidopsis thaliana.</title>
        <authorList>
            <person name="Salanoubat M."/>
            <person name="Lemcke K."/>
            <person name="Rieger M."/>
            <person name="Ansorge W."/>
            <person name="Unseld M."/>
            <person name="Fartmann B."/>
            <person name="Valle G."/>
            <person name="Bloecker H."/>
            <person name="Perez-Alonso M."/>
            <person name="Obermaier B."/>
            <person name="Delseny M."/>
            <person name="Boutry M."/>
            <person name="Grivell L.A."/>
            <person name="Mache R."/>
            <person name="Puigdomenech P."/>
            <person name="De Simone V."/>
            <person name="Choisne N."/>
            <person name="Artiguenave F."/>
            <person name="Robert C."/>
            <person name="Brottier P."/>
            <person name="Wincker P."/>
            <person name="Cattolico L."/>
            <person name="Weissenbach J."/>
            <person name="Saurin W."/>
            <person name="Quetier F."/>
            <person name="Schaefer M."/>
            <person name="Mueller-Auer S."/>
            <person name="Gabel C."/>
            <person name="Fuchs M."/>
            <person name="Benes V."/>
            <person name="Wurmbach E."/>
            <person name="Drzonek H."/>
            <person name="Erfle H."/>
            <person name="Jordan N."/>
            <person name="Bangert S."/>
            <person name="Wiedelmann R."/>
            <person name="Kranz H."/>
            <person name="Voss H."/>
            <person name="Holland R."/>
            <person name="Brandt P."/>
            <person name="Nyakatura G."/>
            <person name="Vezzi A."/>
            <person name="D'Angelo M."/>
            <person name="Pallavicini A."/>
            <person name="Toppo S."/>
            <person name="Simionati B."/>
            <person name="Conrad A."/>
            <person name="Hornischer K."/>
            <person name="Kauer G."/>
            <person name="Loehnert T.-H."/>
            <person name="Nordsiek G."/>
            <person name="Reichelt J."/>
            <person name="Scharfe M."/>
            <person name="Schoen O."/>
            <person name="Bargues M."/>
            <person name="Terol J."/>
            <person name="Climent J."/>
            <person name="Navarro P."/>
            <person name="Collado C."/>
            <person name="Perez-Perez A."/>
            <person name="Ottenwaelder B."/>
            <person name="Duchemin D."/>
            <person name="Cooke R."/>
            <person name="Laudie M."/>
            <person name="Berger-Llauro C."/>
            <person name="Purnelle B."/>
            <person name="Masuy D."/>
            <person name="de Haan M."/>
            <person name="Maarse A.C."/>
            <person name="Alcaraz J.-P."/>
            <person name="Cottet A."/>
            <person name="Casacuberta E."/>
            <person name="Monfort A."/>
            <person name="Argiriou A."/>
            <person name="Flores M."/>
            <person name="Liguori R."/>
            <person name="Vitale D."/>
            <person name="Mannhaupt G."/>
            <person name="Haase D."/>
            <person name="Schoof H."/>
            <person name="Rudd S."/>
            <person name="Zaccaria P."/>
            <person name="Mewes H.-W."/>
            <person name="Mayer K.F.X."/>
            <person name="Kaul S."/>
            <person name="Town C.D."/>
            <person name="Koo H.L."/>
            <person name="Tallon L.J."/>
            <person name="Jenkins J."/>
            <person name="Rooney T."/>
            <person name="Rizzo M."/>
            <person name="Walts A."/>
            <person name="Utterback T."/>
            <person name="Fujii C.Y."/>
            <person name="Shea T.P."/>
            <person name="Creasy T.H."/>
            <person name="Haas B."/>
            <person name="Maiti R."/>
            <person name="Wu D."/>
            <person name="Peterson J."/>
            <person name="Van Aken S."/>
            <person name="Pai G."/>
            <person name="Militscher J."/>
            <person name="Sellers P."/>
            <person name="Gill J.E."/>
            <person name="Feldblyum T.V."/>
            <person name="Preuss D."/>
            <person name="Lin X."/>
            <person name="Nierman W.C."/>
            <person name="Salzberg S.L."/>
            <person name="White O."/>
            <person name="Venter J.C."/>
            <person name="Fraser C.M."/>
            <person name="Kaneko T."/>
            <person name="Nakamura Y."/>
            <person name="Sato S."/>
            <person name="Kato T."/>
            <person name="Asamizu E."/>
            <person name="Sasamoto S."/>
            <person name="Kimura T."/>
            <person name="Idesawa K."/>
            <person name="Kawashima K."/>
            <person name="Kishida Y."/>
            <person name="Kiyokawa C."/>
            <person name="Kohara M."/>
            <person name="Matsumoto M."/>
            <person name="Matsuno A."/>
            <person name="Muraki A."/>
            <person name="Nakayama S."/>
            <person name="Nakazaki N."/>
            <person name="Shinpo S."/>
            <person name="Takeuchi C."/>
            <person name="Wada T."/>
            <person name="Watanabe A."/>
            <person name="Yamada M."/>
            <person name="Yasuda M."/>
            <person name="Tabata S."/>
        </authorList>
    </citation>
    <scope>NUCLEOTIDE SEQUENCE [LARGE SCALE GENOMIC DNA]</scope>
    <source>
        <strain>cv. Columbia</strain>
    </source>
</reference>
<reference key="2">
    <citation type="journal article" date="2017" name="Plant J.">
        <title>Araport11: a complete reannotation of the Arabidopsis thaliana reference genome.</title>
        <authorList>
            <person name="Cheng C.Y."/>
            <person name="Krishnakumar V."/>
            <person name="Chan A.P."/>
            <person name="Thibaud-Nissen F."/>
            <person name="Schobel S."/>
            <person name="Town C.D."/>
        </authorList>
    </citation>
    <scope>GENOME REANNOTATION</scope>
    <source>
        <strain>cv. Columbia</strain>
    </source>
</reference>
<reference key="3">
    <citation type="journal article" date="2003" name="Science">
        <title>Empirical analysis of transcriptional activity in the Arabidopsis genome.</title>
        <authorList>
            <person name="Yamada K."/>
            <person name="Lim J."/>
            <person name="Dale J.M."/>
            <person name="Chen H."/>
            <person name="Shinn P."/>
            <person name="Palm C.J."/>
            <person name="Southwick A.M."/>
            <person name="Wu H.C."/>
            <person name="Kim C.J."/>
            <person name="Nguyen M."/>
            <person name="Pham P.K."/>
            <person name="Cheuk R.F."/>
            <person name="Karlin-Newmann G."/>
            <person name="Liu S.X."/>
            <person name="Lam B."/>
            <person name="Sakano H."/>
            <person name="Wu T."/>
            <person name="Yu G."/>
            <person name="Miranda M."/>
            <person name="Quach H.L."/>
            <person name="Tripp M."/>
            <person name="Chang C.H."/>
            <person name="Lee J.M."/>
            <person name="Toriumi M.J."/>
            <person name="Chan M.M."/>
            <person name="Tang C.C."/>
            <person name="Onodera C.S."/>
            <person name="Deng J.M."/>
            <person name="Akiyama K."/>
            <person name="Ansari Y."/>
            <person name="Arakawa T."/>
            <person name="Banh J."/>
            <person name="Banno F."/>
            <person name="Bowser L."/>
            <person name="Brooks S.Y."/>
            <person name="Carninci P."/>
            <person name="Chao Q."/>
            <person name="Choy N."/>
            <person name="Enju A."/>
            <person name="Goldsmith A.D."/>
            <person name="Gurjal M."/>
            <person name="Hansen N.F."/>
            <person name="Hayashizaki Y."/>
            <person name="Johnson-Hopson C."/>
            <person name="Hsuan V.W."/>
            <person name="Iida K."/>
            <person name="Karnes M."/>
            <person name="Khan S."/>
            <person name="Koesema E."/>
            <person name="Ishida J."/>
            <person name="Jiang P.X."/>
            <person name="Jones T."/>
            <person name="Kawai J."/>
            <person name="Kamiya A."/>
            <person name="Meyers C."/>
            <person name="Nakajima M."/>
            <person name="Narusaka M."/>
            <person name="Seki M."/>
            <person name="Sakurai T."/>
            <person name="Satou M."/>
            <person name="Tamse R."/>
            <person name="Vaysberg M."/>
            <person name="Wallender E.K."/>
            <person name="Wong C."/>
            <person name="Yamamura Y."/>
            <person name="Yuan S."/>
            <person name="Shinozaki K."/>
            <person name="Davis R.W."/>
            <person name="Theologis A."/>
            <person name="Ecker J.R."/>
        </authorList>
    </citation>
    <scope>NUCLEOTIDE SEQUENCE [LARGE SCALE MRNA]</scope>
    <source>
        <strain>cv. Columbia</strain>
    </source>
</reference>
<reference key="4">
    <citation type="submission" date="2002-03" db="EMBL/GenBank/DDBJ databases">
        <title>Full-length cDNA from Arabidopsis thaliana.</title>
        <authorList>
            <person name="Brover V.V."/>
            <person name="Troukhan M.E."/>
            <person name="Alexandrov N.A."/>
            <person name="Lu Y.-P."/>
            <person name="Flavell R.B."/>
            <person name="Feldmann K.A."/>
        </authorList>
    </citation>
    <scope>NUCLEOTIDE SEQUENCE [LARGE SCALE MRNA]</scope>
</reference>
<reference key="5">
    <citation type="journal article" date="2004" name="Plant Cell Physiol.">
        <title>Three Arabidopsis MBF1 homologs with distinct expression profiles play roles as transcriptional co-activators.</title>
        <authorList>
            <person name="Tsuda K."/>
            <person name="Tsuji T."/>
            <person name="Hirose S."/>
            <person name="Yamazaki K."/>
        </authorList>
    </citation>
    <scope>FUNCTION</scope>
    <scope>TISSUE SPECIFICITY</scope>
    <scope>INDUCTION</scope>
</reference>
<reference key="6">
    <citation type="journal article" date="2004" name="Biochim. Biophys. Acta">
        <title>Structure and expression analysis of three subtypes of Arabidopsis MBF1 genes.</title>
        <authorList>
            <person name="Tsuda K."/>
            <person name="Yamazaki K."/>
        </authorList>
    </citation>
    <scope>TISSUE SPECIFICITY</scope>
    <scope>DEVELOPMENTAL STAGE</scope>
    <scope>INDUCTION</scope>
</reference>
<reference key="7">
    <citation type="journal article" date="2005" name="J. Plant Res.">
        <title>Transcriptional coactivator MBF1s from Arabidopsis predominantly localize in nucleolus.</title>
        <authorList>
            <person name="Sugikawa Y."/>
            <person name="Ebihara S."/>
            <person name="Tsuda K."/>
            <person name="Niwa Y."/>
            <person name="Yamazaki K."/>
        </authorList>
    </citation>
    <scope>SUBCELLULAR LOCATION</scope>
</reference>
<reference key="8">
    <citation type="journal article" date="2005" name="Plant Physiol.">
        <title>Enhanced tolerance to environmental stress in transgenic plants expressing the transcriptional coactivator multiprotein bridging factor 1c.</title>
        <authorList>
            <person name="Suzuki N."/>
            <person name="Rizhsky L."/>
            <person name="Liang H."/>
            <person name="Shuman J."/>
            <person name="Shulaev V."/>
            <person name="Mittler R."/>
        </authorList>
    </citation>
    <scope>INDUCTION</scope>
</reference>
<feature type="chain" id="PRO_0000325904" description="Multiprotein-bridging factor 1b">
    <location>
        <begin position="1"/>
        <end position="142"/>
    </location>
</feature>
<feature type="domain" description="HTH cro/C1-type" evidence="2">
    <location>
        <begin position="87"/>
        <end position="141"/>
    </location>
</feature>
<feature type="DNA-binding region" description="H-T-H motif" evidence="2">
    <location>
        <begin position="98"/>
        <end position="117"/>
    </location>
</feature>
<feature type="region of interest" description="Disordered" evidence="3">
    <location>
        <begin position="49"/>
        <end position="75"/>
    </location>
</feature>
<feature type="compositionally biased region" description="Polar residues" evidence="3">
    <location>
        <begin position="50"/>
        <end position="64"/>
    </location>
</feature>
<feature type="compositionally biased region" description="Basic and acidic residues" evidence="3">
    <location>
        <begin position="65"/>
        <end position="75"/>
    </location>
</feature>